<comment type="function">
    <text evidence="1">Coactivator of estrogen receptor-mediated transcription and a corepressor of other nuclear hormone receptors and sequence-specific transcription factors. Plays a role in estrogen receptor (ER) genomic activity when present in the nuclear compartment by activating the ER target genes in a hormonal stimulation dependent manner. Can facilitate ER non-genomic signaling via SRC and PI3K interaction in the cytosol. Plays a role in E2-mediated cell cycle progression by interacting with RB1. May have important functional implications in ER/growth factor cross-talk. Interacts with several growth factor signaling components including EGFR and HRS. Functions as the key stabilizing component of the Five Friends of Methylated CHTOP (5FMC) complex; the 5FMC complex is recruited to ZNF148 by methylated CHTOP, leading to desumoylation of ZNF148 and subsequent transactivation of ZNF148 target genes. Component of the PELP1 complex involved in the nucleolar steps of 28S rRNA maturation and the subsequent nucleoplasmic transit of the pre-60S ribosomal subunit. Regulates pre-60S association of the critical remodeling factor MDN1.</text>
</comment>
<comment type="subunit">
    <text evidence="1">Interacts with HRS, RXRA, SUMO2, HDAC2, RB1 and STAT3. Interacts with PI3K, SRC and EGFR in cytoplasm. Interacts with ESR1, the interaction is enhanced by 17-beta-estradiol; the interaction increases ESR1 transcriptional activity (By similarity). Interacts with CREBBP and EP300 in a ligand-dependent manner (By similarity). Forms two complexes in the presence of 17-beta-estradiol; one with SRC and ESR1 and another with LCK and ESR1. Interacts with histone H1 and H3 with a greater affinity for H1. Component of some MLL1/MLL complex, at least composed of the core components KMT2A/MLL1, ASH2L, HCFC1/HCF1, WDR5 and RBBP5, as well as the facultative components BACC1, CHD8, E2F6, HSP70, INO80C, KANSL1, LAS1L, MAX, MCRS1, MGA, KAT8/MOF, PELP1, PHF20, PRP31, RING2, RUVB1/TIP49A, RUVB2/TIP49B, SENP3, TAF1, TAF4, TAF6, TAF7, TAF9 and TEX10. Core component of the 5FMC complex, at least composed of PELP1, LAS1L, TEX10, WDR18 and SENP3; the complex interacts with methylated CHTOP and ZNF148. Interacts with NOL9. Interacts with BCAS3. Component of the PELP1 complex, composed of at least PELP1, TEX10 and WDR18. The complex interacts (via PELP1) with MDN1 (via its hexameric AAA ATPase ring) and the pre-60S ribosome particles.</text>
</comment>
<comment type="subcellular location">
    <subcellularLocation>
        <location evidence="1">Nucleus</location>
        <location evidence="1">Nucleolus</location>
    </subcellularLocation>
    <subcellularLocation>
        <location evidence="1">Nucleus</location>
        <location evidence="1">Nucleoplasm</location>
    </subcellularLocation>
    <subcellularLocation>
        <location evidence="1">Nucleus</location>
    </subcellularLocation>
    <subcellularLocation>
        <location evidence="1">Cytoplasm</location>
    </subcellularLocation>
    <text evidence="1">Mainly found in the nucleoplasm, with low levels detected in the cytoplasm. Also found associated with the plasma membrane.</text>
</comment>
<comment type="domain">
    <text evidence="1">The Glu-rich region mediates histones interaction.</text>
</comment>
<comment type="domain">
    <text evidence="1">The Leu-Xaa-Xaa-Leu-Leu (LXXLL) motifs are required for the association with nuclear receptor ESR1.</text>
</comment>
<comment type="PTM">
    <text evidence="1">Transiently sumoylated, preferentially conjugated to SUMO2 or SUMO3. Sumoylation causes nucleolar exclusion of PELP1 and promotes the recruitment of MDN1 to pre-60S particles. Desumoylation by SUMO isopeptidase SENP3 is needed to release both PELP1 and MDN1 from pre-ribosomes.</text>
</comment>
<comment type="similarity">
    <text evidence="4">Belongs to the RIX1/PELP1 family.</text>
</comment>
<reference key="1">
    <citation type="submission" date="2006-03" db="EMBL/GenBank/DDBJ databases">
        <title>Cloning and localization of MNAR in monkey brain.</title>
        <authorList>
            <person name="Khan M."/>
            <person name="Hadman M."/>
            <person name="Brann D."/>
        </authorList>
    </citation>
    <scope>NUCLEOTIDE SEQUENCE [MRNA]</scope>
    <source>
        <tissue>Brain</tissue>
    </source>
</reference>
<evidence type="ECO:0000250" key="1">
    <source>
        <dbReference type="UniProtKB" id="Q8IZL8"/>
    </source>
</evidence>
<evidence type="ECO:0000250" key="2">
    <source>
        <dbReference type="UniProtKB" id="Q9DBD5"/>
    </source>
</evidence>
<evidence type="ECO:0000256" key="3">
    <source>
        <dbReference type="SAM" id="MobiDB-lite"/>
    </source>
</evidence>
<evidence type="ECO:0000305" key="4"/>
<feature type="initiator methionine" description="Removed" evidence="1">
    <location>
        <position position="1"/>
    </location>
</feature>
<feature type="chain" id="PRO_0000252136" description="Proline-, glutamic acid- and leucine-rich protein 1">
    <location>
        <begin position="2"/>
        <end position="1130"/>
    </location>
</feature>
<feature type="region of interest" description="Required for modulation of ESR1 transcriptional activity" evidence="1">
    <location>
        <begin position="2"/>
        <end position="80"/>
    </location>
</feature>
<feature type="region of interest" description="Required for modulation of ESR1 transcriptional activity" evidence="1">
    <location>
        <begin position="121"/>
        <end position="189"/>
    </location>
</feature>
<feature type="region of interest" description="Disordered" evidence="3">
    <location>
        <begin position="473"/>
        <end position="494"/>
    </location>
</feature>
<feature type="region of interest" description="Disordered" evidence="3">
    <location>
        <begin position="639"/>
        <end position="1130"/>
    </location>
</feature>
<feature type="short sequence motif" description="LXXLL motif 1">
    <location>
        <begin position="33"/>
        <end position="37"/>
    </location>
</feature>
<feature type="short sequence motif" description="LXXLL motif 2">
    <location>
        <begin position="69"/>
        <end position="73"/>
    </location>
</feature>
<feature type="short sequence motif" description="LXXLL motif 3">
    <location>
        <begin position="111"/>
        <end position="115"/>
    </location>
</feature>
<feature type="short sequence motif" description="LXXLL motif 4">
    <location>
        <begin position="155"/>
        <end position="159"/>
    </location>
</feature>
<feature type="short sequence motif" description="LXXLL motif 5">
    <location>
        <begin position="177"/>
        <end position="181"/>
    </location>
</feature>
<feature type="short sequence motif" description="LXXLL motif 6">
    <location>
        <begin position="264"/>
        <end position="268"/>
    </location>
</feature>
<feature type="short sequence motif" description="LXXLL motif 7">
    <location>
        <begin position="271"/>
        <end position="275"/>
    </location>
</feature>
<feature type="short sequence motif" description="LXXLL motif 8">
    <location>
        <begin position="364"/>
        <end position="368"/>
    </location>
</feature>
<feature type="short sequence motif" description="LXXLL motif 9">
    <location>
        <begin position="459"/>
        <end position="463"/>
    </location>
</feature>
<feature type="short sequence motif" description="LXXLL motif 10">
    <location>
        <begin position="579"/>
        <end position="583"/>
    </location>
</feature>
<feature type="short sequence motif" description="LXXLL motif 11">
    <location>
        <begin position="584"/>
        <end position="588"/>
    </location>
</feature>
<feature type="compositionally biased region" description="Pro residues" evidence="3">
    <location>
        <begin position="639"/>
        <end position="671"/>
    </location>
</feature>
<feature type="compositionally biased region" description="Low complexity" evidence="3">
    <location>
        <begin position="672"/>
        <end position="684"/>
    </location>
</feature>
<feature type="compositionally biased region" description="Acidic residues" evidence="3">
    <location>
        <begin position="774"/>
        <end position="786"/>
    </location>
</feature>
<feature type="compositionally biased region" description="Pro residues" evidence="3">
    <location>
        <begin position="794"/>
        <end position="824"/>
    </location>
</feature>
<feature type="compositionally biased region" description="Pro residues" evidence="3">
    <location>
        <begin position="835"/>
        <end position="860"/>
    </location>
</feature>
<feature type="compositionally biased region" description="Acidic residues" evidence="3">
    <location>
        <begin position="886"/>
        <end position="964"/>
    </location>
</feature>
<feature type="compositionally biased region" description="Pro residues" evidence="3">
    <location>
        <begin position="976"/>
        <end position="998"/>
    </location>
</feature>
<feature type="compositionally biased region" description="Acidic residues" evidence="3">
    <location>
        <begin position="1083"/>
        <end position="1104"/>
    </location>
</feature>
<feature type="modified residue" description="N-acetylalanine" evidence="1">
    <location>
        <position position="2"/>
    </location>
</feature>
<feature type="modified residue" description="Phosphoserine" evidence="2">
    <location>
        <position position="13"/>
    </location>
</feature>
<feature type="modified residue" description="Phosphoserine" evidence="1">
    <location>
        <position position="477"/>
    </location>
</feature>
<feature type="modified residue" description="Phosphoserine" evidence="1">
    <location>
        <position position="481"/>
    </location>
</feature>
<feature type="modified residue" description="Phosphothreonine" evidence="1">
    <location>
        <position position="488"/>
    </location>
</feature>
<feature type="modified residue" description="Phosphothreonine" evidence="1">
    <location>
        <position position="745"/>
    </location>
</feature>
<feature type="modified residue" description="Phosphoserine" evidence="1">
    <location>
        <position position="1033"/>
    </location>
</feature>
<feature type="modified residue" description="Phosphoserine" evidence="1">
    <location>
        <position position="1043"/>
    </location>
</feature>
<accession>Q1W1Y5</accession>
<protein>
    <recommendedName>
        <fullName>Proline-, glutamic acid- and leucine-rich protein 1</fullName>
    </recommendedName>
    <alternativeName>
        <fullName>Modulator of non-genomic activity of estrogen receptor</fullName>
    </alternativeName>
</protein>
<proteinExistence type="evidence at transcript level"/>
<organism>
    <name type="scientific">Macaca mulatta</name>
    <name type="common">Rhesus macaque</name>
    <dbReference type="NCBI Taxonomy" id="9544"/>
    <lineage>
        <taxon>Eukaryota</taxon>
        <taxon>Metazoa</taxon>
        <taxon>Chordata</taxon>
        <taxon>Craniata</taxon>
        <taxon>Vertebrata</taxon>
        <taxon>Euteleostomi</taxon>
        <taxon>Mammalia</taxon>
        <taxon>Eutheria</taxon>
        <taxon>Euarchontoglires</taxon>
        <taxon>Primates</taxon>
        <taxon>Haplorrhini</taxon>
        <taxon>Catarrhini</taxon>
        <taxon>Cercopithecidae</taxon>
        <taxon>Cercopithecinae</taxon>
        <taxon>Macaca</taxon>
    </lineage>
</organism>
<name>PELP1_MACMU</name>
<sequence length="1130" mass="119676">MAAAVLSGSSAGSAAGVPGGTGGLSAVNSGPRLRLLLLESVSGLLQPRTGSAVAPVHPPNRSAPHLPGLMCLLRLHGSVGGAQNLSALGALVSLSNARLSSIKTRFEGLCLLSLLVGESPTELFQQHCVSWLRSIQQVLQTQDPPATMELAVAVLRDLLRYAAQLPALFRDISMNHLPGLLTSLLGLRPECEQSALEGMKACMTYFPRACGSLKGKLASFFLSRVDALSPQLQQLACECYSRLPSLGAGFSQGLKHTESWEQELHSLLASLHTLLGALYEGAETAPVQNEGPGVEMLLSSEDGDAHVLLRLRQRFSGLARCLGLMLSSEFGAPVSVPVQEILDFICRTLSVSSKNISLHGDGPLRLLLLPSIHLEALDLLSALILACGSRLLRFGILISRLLPQVLNSWSIGRDSLSPGQERPYSTVRTKVYAGLELWVQVCGASAGMLQGGASGEALLTHLLSDISPPADALKLRSPRGSPDGSLQTGKPSAPKKLKLDVAEAMAPPSHRKGDSNANSDVCAAALKGLSRTILMCGPLIKEETHRRLHDLVLPLVMGVQQGEVLGSSPYTSSRCRRELYCLLLALLLAPSPRCPPPLACALQAFSLGQREDSLEVSSFCSEALVTCAALTHPRVPPLQPMGPTCPTPAPVPPPEAPSPFRAPPFHPPGPMPSVGSMPSAGPMPSAGPMPSAGPVPSTRLGPPTTANHLGLSVSGLVSVPPRLLPGPENHRSGSNEDPILAPSGTPPPTIPPDETFGGRVPRPAFVHYDKEEASDVEISLESDSDDSVVIVPEGLPPLPPPPPSGATPPPIAPTGPPTASPPVPAKEEPEELPAAPGPLPPPPPPPPPVPGPVTLPPPQLVPEGTPGGVGPPALEEDLTVININSSDEEEEEEEEGEEEEEEEEEEEEDFEEEEEDEEEYFEEEEEEEEEFEEEFEEEEGELEEEEEEEDEEEEEELEEVEELEFGTAGGEVEEGGPPPPTLPPALPPPESPPKVQPEPEPEPGLLLEVEEPGAEEEHGADTAPTLAPEALPSQGEVEREEGSPAAGPPPQELVEEEPSAPPTLLEEETEDGGDRVQPPPETPAEEEMETETEAEALQEKEQDDTAAMLADFIDCPPDDEKPPPPTEPDS</sequence>
<gene>
    <name type="primary">PELP1</name>
    <name type="synonym">MNAR</name>
</gene>
<keyword id="KW-0007">Acetylation</keyword>
<keyword id="KW-0010">Activator</keyword>
<keyword id="KW-0963">Cytoplasm</keyword>
<keyword id="KW-0539">Nucleus</keyword>
<keyword id="KW-0597">Phosphoprotein</keyword>
<keyword id="KW-1185">Reference proteome</keyword>
<keyword id="KW-0677">Repeat</keyword>
<keyword id="KW-0678">Repressor</keyword>
<keyword id="KW-0804">Transcription</keyword>
<keyword id="KW-0832">Ubl conjugation</keyword>
<dbReference type="EMBL" id="DQ447200">
    <property type="protein sequence ID" value="ABE01044.1"/>
    <property type="molecule type" value="mRNA"/>
</dbReference>
<dbReference type="RefSeq" id="NP_001035239.1">
    <property type="nucleotide sequence ID" value="NM_001040149.1"/>
</dbReference>
<dbReference type="SMR" id="Q1W1Y5"/>
<dbReference type="STRING" id="9544.ENSMMUP00000064203"/>
<dbReference type="GeneID" id="677854"/>
<dbReference type="KEGG" id="mcc:677854"/>
<dbReference type="CTD" id="27043"/>
<dbReference type="InParanoid" id="Q1W1Y5"/>
<dbReference type="OrthoDB" id="20900at2759"/>
<dbReference type="Proteomes" id="UP000006718">
    <property type="component" value="Unassembled WGS sequence"/>
</dbReference>
<dbReference type="GO" id="GO:0005737">
    <property type="term" value="C:cytoplasm"/>
    <property type="evidence" value="ECO:0007669"/>
    <property type="project" value="UniProtKB-SubCell"/>
</dbReference>
<dbReference type="GO" id="GO:0000791">
    <property type="term" value="C:euchromatin"/>
    <property type="evidence" value="ECO:0000250"/>
    <property type="project" value="UniProtKB"/>
</dbReference>
<dbReference type="GO" id="GO:0071339">
    <property type="term" value="C:MLL1 complex"/>
    <property type="evidence" value="ECO:0000250"/>
    <property type="project" value="UniProtKB"/>
</dbReference>
<dbReference type="GO" id="GO:0005730">
    <property type="term" value="C:nucleolus"/>
    <property type="evidence" value="ECO:0007669"/>
    <property type="project" value="UniProtKB-SubCell"/>
</dbReference>
<dbReference type="GO" id="GO:0005634">
    <property type="term" value="C:nucleus"/>
    <property type="evidence" value="ECO:0000318"/>
    <property type="project" value="GO_Central"/>
</dbReference>
<dbReference type="GO" id="GO:0003682">
    <property type="term" value="F:chromatin binding"/>
    <property type="evidence" value="ECO:0000250"/>
    <property type="project" value="UniProtKB"/>
</dbReference>
<dbReference type="GO" id="GO:0071391">
    <property type="term" value="P:cellular response to estrogen stimulus"/>
    <property type="evidence" value="ECO:0000250"/>
    <property type="project" value="UniProtKB"/>
</dbReference>
<dbReference type="GO" id="GO:0045944">
    <property type="term" value="P:positive regulation of transcription by RNA polymerase II"/>
    <property type="evidence" value="ECO:0000250"/>
    <property type="project" value="UniProtKB"/>
</dbReference>
<dbReference type="GO" id="GO:0006364">
    <property type="term" value="P:rRNA processing"/>
    <property type="evidence" value="ECO:0000318"/>
    <property type="project" value="GO_Central"/>
</dbReference>
<dbReference type="FunFam" id="1.25.10.10:FF:001118">
    <property type="entry name" value="Proline-, glutamic acid- and leucine-rich protein 1"/>
    <property type="match status" value="1"/>
</dbReference>
<dbReference type="Gene3D" id="1.25.10.10">
    <property type="entry name" value="Leucine-rich Repeat Variant"/>
    <property type="match status" value="1"/>
</dbReference>
<dbReference type="InterPro" id="IPR011989">
    <property type="entry name" value="ARM-like"/>
</dbReference>
<dbReference type="InterPro" id="IPR016024">
    <property type="entry name" value="ARM-type_fold"/>
</dbReference>
<dbReference type="InterPro" id="IPR012980">
    <property type="entry name" value="PELP1_middle"/>
</dbReference>
<dbReference type="InterPro" id="IPR012583">
    <property type="entry name" value="RIX1_N"/>
</dbReference>
<dbReference type="PANTHER" id="PTHR34105">
    <property type="entry name" value="PROLINE-, GLUTAMIC ACID- AND LEUCINE-RICH PROTEIN 1"/>
    <property type="match status" value="1"/>
</dbReference>
<dbReference type="PANTHER" id="PTHR34105:SF1">
    <property type="entry name" value="PROLINE-, GLUTAMIC ACID- AND LEUCINE-RICH PROTEIN 1"/>
    <property type="match status" value="1"/>
</dbReference>
<dbReference type="Pfam" id="PF08166">
    <property type="entry name" value="PELP1_HEAT"/>
    <property type="match status" value="2"/>
</dbReference>
<dbReference type="Pfam" id="PF08167">
    <property type="entry name" value="RIX1"/>
    <property type="match status" value="1"/>
</dbReference>
<dbReference type="SUPFAM" id="SSF48371">
    <property type="entry name" value="ARM repeat"/>
    <property type="match status" value="1"/>
</dbReference>